<comment type="function">
    <molecule>Serine protease p27</molecule>
    <text evidence="2">Responsible for the cleavage of the polyprotein into functional products.</text>
</comment>
<comment type="function">
    <molecule>Viral genome-linked protein</molecule>
    <text evidence="3">Protein covalently attached to the 5' extremity of the genomic and subgenomic RNAs (By similarity). It may serve as a primer for the replicase (By similarity).</text>
</comment>
<comment type="catalytic activity">
    <reaction>
        <text>RNA(n) + a ribonucleoside 5'-triphosphate = RNA(n+1) + diphosphate</text>
        <dbReference type="Rhea" id="RHEA:21248"/>
        <dbReference type="Rhea" id="RHEA-COMP:14527"/>
        <dbReference type="Rhea" id="RHEA-COMP:17342"/>
        <dbReference type="ChEBI" id="CHEBI:33019"/>
        <dbReference type="ChEBI" id="CHEBI:61557"/>
        <dbReference type="ChEBI" id="CHEBI:140395"/>
    </reaction>
</comment>
<comment type="subunit">
    <molecule>Serine protease p27</molecule>
    <text evidence="2">Monomer.</text>
</comment>
<comment type="subcellular location">
    <molecule>Transmembrane protein 1A</molecule>
    <subcellularLocation>
        <location evidence="6">Host membrane</location>
        <topology evidence="6">Multi-pass membrane protein</topology>
    </subcellularLocation>
</comment>
<comment type="alternative products">
    <event type="ribosomal frameshifting"/>
    <isoform>
        <id>Q4TWH9-1</id>
        <name>nsp1a</name>
        <sequence type="displayed"/>
    </isoform>
    <isoform>
        <id>Q4TWH8-1</id>
        <name>nsp1ab</name>
        <sequence type="external"/>
    </isoform>
</comment>
<comment type="PTM">
    <text evidence="2">Cleaved by the viral and host proteases (By similarity). The protease is probably autocatalytically cleaved (By similarity).</text>
</comment>
<comment type="similarity">
    <text evidence="6">Belongs to the astroviridae polyprotein 1A family.</text>
</comment>
<gene>
    <name type="primary">ORF1</name>
</gene>
<protein>
    <recommendedName>
        <fullName>Non-structural polyprotein 1A</fullName>
    </recommendedName>
    <component>
        <recommendedName>
            <fullName>Protein p19</fullName>
        </recommendedName>
    </component>
    <component>
        <recommendedName>
            <fullName>Transmembrane protein 1A</fullName>
        </recommendedName>
    </component>
    <component>
        <recommendedName>
            <fullName>Serine protease p27</fullName>
            <shortName>p27</shortName>
            <ecNumber evidence="2">3.4.21.-</ecNumber>
        </recommendedName>
    </component>
    <component>
        <recommendedName>
            <fullName>Viral genome-linked protein</fullName>
        </recommendedName>
        <alternativeName>
            <fullName>VPg</fullName>
        </alternativeName>
    </component>
    <component>
        <recommendedName>
            <fullName>Protein p20'</fullName>
        </recommendedName>
    </component>
</protein>
<reference key="1">
    <citation type="journal article" date="2006" name="Arch. Virol.">
        <title>Molecular characterization of human astroviruses isolated in Brazil, including the complete sequences of astrovirus genotypes 4 and 5.</title>
        <authorList>
            <person name="Silva P.A."/>
            <person name="Cardoso D.D."/>
            <person name="Schreier E."/>
        </authorList>
    </citation>
    <scope>NUCLEOTIDE SEQUENCE [GENOMIC RNA]</scope>
    <source>
        <strain>Goiania/GO/12/94/Brazil</strain>
    </source>
</reference>
<proteinExistence type="inferred from homology"/>
<keyword id="KW-0191">Covalent protein-RNA linkage</keyword>
<keyword id="KW-1043">Host membrane</keyword>
<keyword id="KW-0378">Hydrolase</keyword>
<keyword id="KW-0472">Membrane</keyword>
<keyword id="KW-0597">Phosphoprotein</keyword>
<keyword id="KW-0645">Protease</keyword>
<keyword id="KW-0688">Ribosomal frameshifting</keyword>
<keyword id="KW-0720">Serine protease</keyword>
<keyword id="KW-0812">Transmembrane</keyword>
<keyword id="KW-1133">Transmembrane helix</keyword>
<keyword id="KW-0693">Viral RNA replication</keyword>
<organismHost>
    <name type="scientific">Homo sapiens</name>
    <name type="common">Human</name>
    <dbReference type="NCBI Taxonomy" id="9606"/>
</organismHost>
<sequence length="920" mass="103531">MAHGEPYYSSKPDKDFNFGSTMARRQMTPTMVTKLPKFVRNSPQVYDWIVRGLIFPTTGKTYFQRVVVITGGFEDGTYGSFAFDGREWVEIYPIEHLNLMSSLKLIHKANALQERLRLSQEEKATLTLDVQFLQHENVRLKELISKPEPRKIQMKWIIVGAVLTFLSLIPGGYAQSQTNNTIFTDVIAACKYSTETLTENLDLRIKLALANITISDKLDAVRQILNFAFVPRSHWLRTVFYYIHYYEMWNIFMFVLAIGTVMRSTRPGTDLITLATSHLSGFRMAVLPTIPFHTTMTLWVMNTLMVCYYFDNLLAITMAILAPILGIIFLCFMEDSNYVSQIRGLIATAVLIAGGHACLTLTGTTTSLFVVILTCRFVRMATIFIGTRFEIRDANGKVVATVPTRIKNAAFDFFQRLKQSGVRVGVNEFVVIKPGALCVIDTPEGKGTGFFSGNDIVTAAHVVGNNTFVNVCYEGLMYEAKVRYMPEKDIAFITCPGDLHPTARLKLSKNPDYSCVTVMAYVNEDLVVSTAAAMVHGNTLSYAVRTQDGMSGAPVCDKYGRVLAVHQTNTGYTGGAVIIDPADFHPVKAPSQVELLKEEIERLKAQLNSAAENPSTVITQQPTATLEQKSVNDSDVVDLVRTAMEREMKILRDEINGILAPFLQKKKGKTKHGRGRVRRNLRKGVKLLTEEEYRELLEKGLDRETFLDLIDRIIGERSGYPDYDDEDYYDEDDDGWGMVGDDVEFDYTEVINFDQAKPTPAPRTTKPKPCPEPEAETQPLDLSQKKDKQLEHEQQVVKPTKPQKNDPQPYSQTYGKAPIWESYDFDWDEDDAKFILPAPPRLTKADEIVLGSKIVKLRTIIETAIKTQNYSALPEAVFELDKAAYEAGLEGFLQRVKSKNKAPKNYKGPQKTKGPKTIIH</sequence>
<name>NS1A_HASV5</name>
<dbReference type="EC" id="3.4.21.-" evidence="2"/>
<dbReference type="EMBL" id="DQ028633">
    <property type="protein sequence ID" value="AAY46272.1"/>
    <property type="molecule type" value="Genomic_RNA"/>
</dbReference>
<dbReference type="SMR" id="Q4TWH9"/>
<dbReference type="IntAct" id="Q4TWH9">
    <property type="interactions" value="1"/>
</dbReference>
<dbReference type="Proteomes" id="UP000008628">
    <property type="component" value="Genome"/>
</dbReference>
<dbReference type="GO" id="GO:0033644">
    <property type="term" value="C:host cell membrane"/>
    <property type="evidence" value="ECO:0007669"/>
    <property type="project" value="UniProtKB-SubCell"/>
</dbReference>
<dbReference type="GO" id="GO:0016020">
    <property type="term" value="C:membrane"/>
    <property type="evidence" value="ECO:0007669"/>
    <property type="project" value="UniProtKB-KW"/>
</dbReference>
<dbReference type="GO" id="GO:0034062">
    <property type="term" value="F:5'-3' RNA polymerase activity"/>
    <property type="evidence" value="ECO:0007669"/>
    <property type="project" value="RHEA"/>
</dbReference>
<dbReference type="GO" id="GO:0004252">
    <property type="term" value="F:serine-type endopeptidase activity"/>
    <property type="evidence" value="ECO:0007669"/>
    <property type="project" value="InterPro"/>
</dbReference>
<dbReference type="GO" id="GO:0070008">
    <property type="term" value="F:serine-type exopeptidase activity"/>
    <property type="evidence" value="ECO:0007669"/>
    <property type="project" value="InterPro"/>
</dbReference>
<dbReference type="GO" id="GO:0006508">
    <property type="term" value="P:proteolysis"/>
    <property type="evidence" value="ECO:0007669"/>
    <property type="project" value="UniProtKB-KW"/>
</dbReference>
<dbReference type="GO" id="GO:0075523">
    <property type="term" value="P:viral translational frameshifting"/>
    <property type="evidence" value="ECO:0007669"/>
    <property type="project" value="UniProtKB-KW"/>
</dbReference>
<dbReference type="Gene3D" id="2.40.10.10">
    <property type="entry name" value="Trypsin-like serine proteases"/>
    <property type="match status" value="2"/>
</dbReference>
<dbReference type="InterPro" id="IPR045835">
    <property type="entry name" value="Astro_1A"/>
</dbReference>
<dbReference type="InterPro" id="IPR045833">
    <property type="entry name" value="Astro_p19"/>
</dbReference>
<dbReference type="InterPro" id="IPR045836">
    <property type="entry name" value="Astro_VPg"/>
</dbReference>
<dbReference type="InterPro" id="IPR022068">
    <property type="entry name" value="Mamastrovirus_p20"/>
</dbReference>
<dbReference type="InterPro" id="IPR009003">
    <property type="entry name" value="Peptidase_S1_PA"/>
</dbReference>
<dbReference type="InterPro" id="IPR043504">
    <property type="entry name" value="Peptidase_S1_PA_chymotrypsin"/>
</dbReference>
<dbReference type="Pfam" id="PF19415">
    <property type="entry name" value="Astro_1A"/>
    <property type="match status" value="1"/>
</dbReference>
<dbReference type="Pfam" id="PF19414">
    <property type="entry name" value="Astro_p19"/>
    <property type="match status" value="1"/>
</dbReference>
<dbReference type="Pfam" id="PF19416">
    <property type="entry name" value="Astro_VPg"/>
    <property type="match status" value="1"/>
</dbReference>
<dbReference type="Pfam" id="PF12285">
    <property type="entry name" value="Astrovir_pp_1"/>
    <property type="match status" value="1"/>
</dbReference>
<dbReference type="Pfam" id="PF13365">
    <property type="entry name" value="Trypsin_2"/>
    <property type="match status" value="1"/>
</dbReference>
<dbReference type="SUPFAM" id="SSF50494">
    <property type="entry name" value="Trypsin-like serine proteases"/>
    <property type="match status" value="1"/>
</dbReference>
<evidence type="ECO:0000250" key="1"/>
<evidence type="ECO:0000250" key="2">
    <source>
        <dbReference type="UniProtKB" id="P0C6K4"/>
    </source>
</evidence>
<evidence type="ECO:0000250" key="3">
    <source>
        <dbReference type="UniProtKB" id="Q3ZN07"/>
    </source>
</evidence>
<evidence type="ECO:0000255" key="4"/>
<evidence type="ECO:0000256" key="5">
    <source>
        <dbReference type="SAM" id="MobiDB-lite"/>
    </source>
</evidence>
<evidence type="ECO:0000305" key="6"/>
<accession>Q4TWH9</accession>
<feature type="chain" id="PRO_0000327335" description="Non-structural polyprotein 1A">
    <location>
        <begin position="1"/>
        <end position="920"/>
    </location>
</feature>
<feature type="chain" id="PRO_0000327336" description="Protein p19" evidence="4">
    <location>
        <begin position="1"/>
        <end position="175"/>
    </location>
</feature>
<feature type="chain" id="PRO_0000327337" description="Transmembrane protein 1A" evidence="4">
    <location>
        <begin position="176"/>
        <end position="419"/>
    </location>
</feature>
<feature type="chain" id="PRO_0000327338" description="Serine protease p27" evidence="4">
    <location>
        <begin position="420"/>
        <end position="664"/>
    </location>
</feature>
<feature type="chain" id="PRO_0000419597" description="Viral genome-linked protein" evidence="4">
    <location>
        <begin position="665"/>
        <end position="755"/>
    </location>
</feature>
<feature type="chain" id="PRO_0000327339" description="Protein p20'" evidence="4">
    <location>
        <begin position="756"/>
        <end position="920"/>
    </location>
</feature>
<feature type="transmembrane region" description="Helical" evidence="4">
    <location>
        <begin position="239"/>
        <end position="259"/>
    </location>
</feature>
<feature type="transmembrane region" description="Helical" evidence="4">
    <location>
        <begin position="286"/>
        <end position="306"/>
    </location>
</feature>
<feature type="transmembrane region" description="Helical" evidence="4">
    <location>
        <begin position="313"/>
        <end position="333"/>
    </location>
</feature>
<feature type="transmembrane region" description="Helical" evidence="4">
    <location>
        <begin position="344"/>
        <end position="364"/>
    </location>
</feature>
<feature type="region of interest" description="Disordered" evidence="5">
    <location>
        <begin position="752"/>
        <end position="815"/>
    </location>
</feature>
<feature type="region of interest" description="Disordered" evidence="5">
    <location>
        <begin position="900"/>
        <end position="920"/>
    </location>
</feature>
<feature type="compositionally biased region" description="Basic and acidic residues" evidence="5">
    <location>
        <begin position="783"/>
        <end position="795"/>
    </location>
</feature>
<feature type="compositionally biased region" description="Polar residues" evidence="5">
    <location>
        <begin position="805"/>
        <end position="814"/>
    </location>
</feature>
<feature type="active site" description="Charge relay system; for serine protease activity" evidence="1">
    <location>
        <position position="461"/>
    </location>
</feature>
<feature type="active site" description="Charge relay system; for serine protease activity" evidence="1">
    <location>
        <position position="489"/>
    </location>
</feature>
<feature type="active site" description="Charge relay system; for serine protease activity" evidence="1">
    <location>
        <position position="551"/>
    </location>
</feature>
<feature type="site" description="Cleavage" evidence="4">
    <location>
        <begin position="175"/>
        <end position="176"/>
    </location>
</feature>
<feature type="site" description="Cleavage" evidence="4">
    <location>
        <begin position="419"/>
        <end position="420"/>
    </location>
</feature>
<feature type="site" description="Cleavage" evidence="2">
    <location>
        <begin position="664"/>
        <end position="665"/>
    </location>
</feature>
<feature type="site" description="Cleavage" evidence="4">
    <location>
        <begin position="755"/>
        <end position="756"/>
    </location>
</feature>
<feature type="modified residue" description="O-(5'-phospho-RNA)-tyrosine" evidence="3">
    <location>
        <position position="693"/>
    </location>
</feature>
<organism>
    <name type="scientific">Human astrovirus-5</name>
    <name type="common">HAstV-5</name>
    <dbReference type="NCBI Taxonomy" id="35741"/>
    <lineage>
        <taxon>Viruses</taxon>
        <taxon>Riboviria</taxon>
        <taxon>Orthornavirae</taxon>
        <taxon>Pisuviricota</taxon>
        <taxon>Stelpaviricetes</taxon>
        <taxon>Stellavirales</taxon>
        <taxon>Astroviridae</taxon>
        <taxon>Mamastrovirus</taxon>
        <taxon>Mamastrovirus 1</taxon>
    </lineage>
</organism>